<proteinExistence type="evidence at protein level"/>
<comment type="function">
    <text evidence="4 6">DEAD-box RNA helicase that plays a role in 70S ribosome assembly. May work in conjunction with the cold shock proteins to ensure proper initiation of transcription at low and optimal temperatures.</text>
</comment>
<comment type="catalytic activity">
    <reaction evidence="1">
        <text>ATP + H2O = ADP + phosphate + H(+)</text>
        <dbReference type="Rhea" id="RHEA:13065"/>
        <dbReference type="ChEBI" id="CHEBI:15377"/>
        <dbReference type="ChEBI" id="CHEBI:15378"/>
        <dbReference type="ChEBI" id="CHEBI:30616"/>
        <dbReference type="ChEBI" id="CHEBI:43474"/>
        <dbReference type="ChEBI" id="CHEBI:456216"/>
        <dbReference type="EC" id="3.6.4.13"/>
    </reaction>
</comment>
<comment type="subunit">
    <text evidence="4 5">Interacts with CspB when cells are transcriptionally active. May interact with RNA helicases CshA and DbpA (DeaD), may be a component of a possible RNA degradosome complex composed of rny, rnja, rnjb, pnp, pfkA and eno (although rnjA and rnjB's presence is unclear). Specifically interacts with pnp and rny (PubMed:20572937).</text>
</comment>
<comment type="subcellular location">
    <subcellularLocation>
        <location evidence="4 5">Cytoplasm</location>
        <location evidence="4 5">Nucleoid</location>
    </subcellularLocation>
    <text>Shows transcription-dependent localization at subcellular sites surrounding the nucleoid.</text>
</comment>
<comment type="induction">
    <text evidence="3 4 5 6">Induced by cold shock (PubMed:12399512). In rich medium highest expression in logarithmic growth, expression decreases and then disappears in stationary phase (at protein level) (PubMed:20572937, PubMed:23175651). Protein level not increased at 16 degrees Celsius. Not detected in minimal medium (at protein level) (PubMed:20572937).</text>
</comment>
<comment type="disruption phenotype">
    <text evidence="4 6">No difference in growth at 37 or 15 degrees Celsius (PubMed:16352840), decreased growth at 16 degrees Celsius (PubMed:23175651). The presence of CshA or CshB is essential for viability; in a cshA disruption mutant further depletion of cshB stops growth after 1 cell duplication (PubMed:16352840). Others show a quadruple disruption of all RNA helicases (cshA, cshB, deaD, yfmL) was not lethal at 37 degrees Celsius, although both 50S and 70S ribosomes are decreased, but growth stops at 16 degrees (PubMed:23175651). A double cshB-cspB disruption mutant cannot be made. A double cshB-cspD mutant grows slowly at 15 degrees Celsius (PubMed:16352840). Decreased amounts of 70S ribosomes (PubMed:23175651).</text>
</comment>
<comment type="similarity">
    <text evidence="7">Belongs to the DEAD box helicase family.</text>
</comment>
<feature type="chain" id="PRO_0000055111" description="DEAD-box ATP-dependent RNA helicase CshB">
    <location>
        <begin position="1"/>
        <end position="438"/>
    </location>
</feature>
<feature type="domain" description="Helicase ATP-binding" evidence="1">
    <location>
        <begin position="35"/>
        <end position="208"/>
    </location>
</feature>
<feature type="domain" description="Helicase C-terminal" evidence="1">
    <location>
        <begin position="235"/>
        <end position="385"/>
    </location>
</feature>
<feature type="region of interest" description="Disordered" evidence="2">
    <location>
        <begin position="380"/>
        <end position="438"/>
    </location>
</feature>
<feature type="short sequence motif" description="Q motif">
    <location>
        <begin position="4"/>
        <end position="32"/>
    </location>
</feature>
<feature type="short sequence motif" description="DEAD box">
    <location>
        <begin position="156"/>
        <end position="159"/>
    </location>
</feature>
<feature type="compositionally biased region" description="Basic and acidic residues" evidence="2">
    <location>
        <begin position="392"/>
        <end position="401"/>
    </location>
</feature>
<feature type="compositionally biased region" description="Basic residues" evidence="2">
    <location>
        <begin position="402"/>
        <end position="417"/>
    </location>
</feature>
<feature type="compositionally biased region" description="Basic residues" evidence="2">
    <location>
        <begin position="425"/>
        <end position="438"/>
    </location>
</feature>
<feature type="binding site" evidence="1">
    <location>
        <begin position="48"/>
        <end position="55"/>
    </location>
    <ligand>
        <name>ATP</name>
        <dbReference type="ChEBI" id="CHEBI:30616"/>
    </ligand>
</feature>
<accession>P54475</accession>
<sequence>MKETKFELYELKPFIIDAVHRLGFYEPTDIQKRLIPAVLKKESVIGQSQTGTGKTHAYLLPLLNKIDPAKDVVQVVITAPTRELANQIYQEALKITQGEEGSQIRSKCFIGGTDKQKSIDKLKIQPHLVVGTPGRIADLIKEQALSVHKAESLVIDEADLMLDMGFLADVDYIGSRMPEDLQMLVFSATIPEKLKPFLKKYMENPKYAHVEPKQVTAAKIEHILIPSKHRDKDKLLFDIMSHLNPYLGIVFANTKNTADHIAQYLTGKGMKIGLLHGGLTPRERKKVMKQINDLEFTYIIATDLAARGIDIKGVSHVINYELPDDLDFYVHRVGRTARAGSSGQAMTIYELTDEDALVRLEKMGIEFEYLELEKGEWKKGDDRQRRKKRKKTPNEADEIAHRLVKKPKKVKPGYKKKMSYEMEKIKKKQRRNQSKKRK</sequence>
<reference key="1">
    <citation type="journal article" date="1996" name="Microbiology">
        <title>Systematic sequencing of the 283 kb 210 degrees-232 degrees region of the Bacillus subtilis genome containing the skin element and many sporulation genes.</title>
        <authorList>
            <person name="Mizuno M."/>
            <person name="Masuda S."/>
            <person name="Takemaru K."/>
            <person name="Hosono S."/>
            <person name="Sato T."/>
            <person name="Takeuchi M."/>
            <person name="Kobayashi Y."/>
        </authorList>
    </citation>
    <scope>NUCLEOTIDE SEQUENCE [GENOMIC DNA]</scope>
    <source>
        <strain>168 / JH642</strain>
    </source>
</reference>
<reference key="2">
    <citation type="journal article" date="1997" name="Nature">
        <title>The complete genome sequence of the Gram-positive bacterium Bacillus subtilis.</title>
        <authorList>
            <person name="Kunst F."/>
            <person name="Ogasawara N."/>
            <person name="Moszer I."/>
            <person name="Albertini A.M."/>
            <person name="Alloni G."/>
            <person name="Azevedo V."/>
            <person name="Bertero M.G."/>
            <person name="Bessieres P."/>
            <person name="Bolotin A."/>
            <person name="Borchert S."/>
            <person name="Borriss R."/>
            <person name="Boursier L."/>
            <person name="Brans A."/>
            <person name="Braun M."/>
            <person name="Brignell S.C."/>
            <person name="Bron S."/>
            <person name="Brouillet S."/>
            <person name="Bruschi C.V."/>
            <person name="Caldwell B."/>
            <person name="Capuano V."/>
            <person name="Carter N.M."/>
            <person name="Choi S.-K."/>
            <person name="Codani J.-J."/>
            <person name="Connerton I.F."/>
            <person name="Cummings N.J."/>
            <person name="Daniel R.A."/>
            <person name="Denizot F."/>
            <person name="Devine K.M."/>
            <person name="Duesterhoeft A."/>
            <person name="Ehrlich S.D."/>
            <person name="Emmerson P.T."/>
            <person name="Entian K.-D."/>
            <person name="Errington J."/>
            <person name="Fabret C."/>
            <person name="Ferrari E."/>
            <person name="Foulger D."/>
            <person name="Fritz C."/>
            <person name="Fujita M."/>
            <person name="Fujita Y."/>
            <person name="Fuma S."/>
            <person name="Galizzi A."/>
            <person name="Galleron N."/>
            <person name="Ghim S.-Y."/>
            <person name="Glaser P."/>
            <person name="Goffeau A."/>
            <person name="Golightly E.J."/>
            <person name="Grandi G."/>
            <person name="Guiseppi G."/>
            <person name="Guy B.J."/>
            <person name="Haga K."/>
            <person name="Haiech J."/>
            <person name="Harwood C.R."/>
            <person name="Henaut A."/>
            <person name="Hilbert H."/>
            <person name="Holsappel S."/>
            <person name="Hosono S."/>
            <person name="Hullo M.-F."/>
            <person name="Itaya M."/>
            <person name="Jones L.-M."/>
            <person name="Joris B."/>
            <person name="Karamata D."/>
            <person name="Kasahara Y."/>
            <person name="Klaerr-Blanchard M."/>
            <person name="Klein C."/>
            <person name="Kobayashi Y."/>
            <person name="Koetter P."/>
            <person name="Koningstein G."/>
            <person name="Krogh S."/>
            <person name="Kumano M."/>
            <person name="Kurita K."/>
            <person name="Lapidus A."/>
            <person name="Lardinois S."/>
            <person name="Lauber J."/>
            <person name="Lazarevic V."/>
            <person name="Lee S.-M."/>
            <person name="Levine A."/>
            <person name="Liu H."/>
            <person name="Masuda S."/>
            <person name="Mauel C."/>
            <person name="Medigue C."/>
            <person name="Medina N."/>
            <person name="Mellado R.P."/>
            <person name="Mizuno M."/>
            <person name="Moestl D."/>
            <person name="Nakai S."/>
            <person name="Noback M."/>
            <person name="Noone D."/>
            <person name="O'Reilly M."/>
            <person name="Ogawa K."/>
            <person name="Ogiwara A."/>
            <person name="Oudega B."/>
            <person name="Park S.-H."/>
            <person name="Parro V."/>
            <person name="Pohl T.M."/>
            <person name="Portetelle D."/>
            <person name="Porwollik S."/>
            <person name="Prescott A.M."/>
            <person name="Presecan E."/>
            <person name="Pujic P."/>
            <person name="Purnelle B."/>
            <person name="Rapoport G."/>
            <person name="Rey M."/>
            <person name="Reynolds S."/>
            <person name="Rieger M."/>
            <person name="Rivolta C."/>
            <person name="Rocha E."/>
            <person name="Roche B."/>
            <person name="Rose M."/>
            <person name="Sadaie Y."/>
            <person name="Sato T."/>
            <person name="Scanlan E."/>
            <person name="Schleich S."/>
            <person name="Schroeter R."/>
            <person name="Scoffone F."/>
            <person name="Sekiguchi J."/>
            <person name="Sekowska A."/>
            <person name="Seror S.J."/>
            <person name="Serror P."/>
            <person name="Shin B.-S."/>
            <person name="Soldo B."/>
            <person name="Sorokin A."/>
            <person name="Tacconi E."/>
            <person name="Takagi T."/>
            <person name="Takahashi H."/>
            <person name="Takemaru K."/>
            <person name="Takeuchi M."/>
            <person name="Tamakoshi A."/>
            <person name="Tanaka T."/>
            <person name="Terpstra P."/>
            <person name="Tognoni A."/>
            <person name="Tosato V."/>
            <person name="Uchiyama S."/>
            <person name="Vandenbol M."/>
            <person name="Vannier F."/>
            <person name="Vassarotti A."/>
            <person name="Viari A."/>
            <person name="Wambutt R."/>
            <person name="Wedler E."/>
            <person name="Wedler H."/>
            <person name="Weitzenegger T."/>
            <person name="Winters P."/>
            <person name="Wipat A."/>
            <person name="Yamamoto H."/>
            <person name="Yamane K."/>
            <person name="Yasumoto K."/>
            <person name="Yata K."/>
            <person name="Yoshida K."/>
            <person name="Yoshikawa H.-F."/>
            <person name="Zumstein E."/>
            <person name="Yoshikawa H."/>
            <person name="Danchin A."/>
        </authorList>
    </citation>
    <scope>NUCLEOTIDE SEQUENCE [LARGE SCALE GENOMIC DNA]</scope>
    <source>
        <strain>168</strain>
    </source>
</reference>
<reference key="3">
    <citation type="journal article" date="2002" name="J. Bacteriol.">
        <title>Genomewide transcriptional analysis of the cold shock response in Bacillus subtilis.</title>
        <authorList>
            <person name="Beckering C.L."/>
            <person name="Steil L."/>
            <person name="Weber M.H.W."/>
            <person name="Voelker U."/>
            <person name="Marahiel M.A."/>
        </authorList>
    </citation>
    <scope>INDUCTION BY COLD SHOCK</scope>
    <source>
        <strain>168 / JH642</strain>
    </source>
</reference>
<reference key="4">
    <citation type="journal article" date="2006" name="J. Bacteriol.">
        <title>Cold-induced putative DEAD box RNA helicases CshA and CshB are essential for cold adaptation and interact with cold shock protein B in Bacillus subtilis.</title>
        <authorList>
            <person name="Hunger K."/>
            <person name="Beckering C.L."/>
            <person name="Wiegeshoff F."/>
            <person name="Graumann P.L."/>
            <person name="Marahiel M.A."/>
        </authorList>
    </citation>
    <scope>FUNCTION</scope>
    <scope>SUBCELLULAR LOCATION</scope>
    <scope>INTERACTION WITH CSPB</scope>
    <scope>INDUCTION</scope>
    <scope>DISRUPTION PHENOTYPE</scope>
    <source>
        <strain>168 / JH642</strain>
    </source>
</reference>
<reference key="5">
    <citation type="journal article" date="2010" name="Mol. Microbiol.">
        <title>The RNA degradosome in Bacillus subtilis: identification of CshA as the major RNA helicase in the multiprotein complex.</title>
        <authorList>
            <person name="Lehnik-Habrink M."/>
            <person name="Pfortner H."/>
            <person name="Rempeters L."/>
            <person name="Pietack N."/>
            <person name="Herzberg C."/>
            <person name="Stulke J."/>
        </authorList>
    </citation>
    <scope>INTERACTION WITH PNP</scope>
    <scope>SUBUNIT</scope>
    <scope>SUBCELLULAR LOCATION</scope>
    <scope>INDUCTION</scope>
    <source>
        <strain>168</strain>
    </source>
</reference>
<reference key="6">
    <citation type="journal article" date="2013" name="J. Bacteriol.">
        <title>DEAD-box RNA helicases in Bacillus subtilis have multiple functions and act independently from each other.</title>
        <authorList>
            <person name="Lehnik-Habrink M."/>
            <person name="Rempeters L."/>
            <person name="Kovacs A.T."/>
            <person name="Wrede C."/>
            <person name="Baierlein C."/>
            <person name="Krebber H."/>
            <person name="Kuipers O.P."/>
            <person name="Stulke J."/>
        </authorList>
    </citation>
    <scope>FUNCTION</scope>
    <scope>INDUCTION</scope>
    <scope>DISRUPTION PHENOTYPE</scope>
    <source>
        <strain>168</strain>
    </source>
</reference>
<dbReference type="EC" id="3.6.4.13" evidence="1"/>
<dbReference type="EMBL" id="D84432">
    <property type="protein sequence ID" value="BAA12495.1"/>
    <property type="molecule type" value="Genomic_DNA"/>
</dbReference>
<dbReference type="EMBL" id="AL009126">
    <property type="protein sequence ID" value="CAB14444.1"/>
    <property type="molecule type" value="Genomic_DNA"/>
</dbReference>
<dbReference type="PIR" id="D69954">
    <property type="entry name" value="D69954"/>
</dbReference>
<dbReference type="RefSeq" id="NP_390393.1">
    <property type="nucleotide sequence ID" value="NC_000964.3"/>
</dbReference>
<dbReference type="RefSeq" id="WP_004399101.1">
    <property type="nucleotide sequence ID" value="NZ_OZ025638.1"/>
</dbReference>
<dbReference type="SMR" id="P54475"/>
<dbReference type="FunCoup" id="P54475">
    <property type="interactions" value="27"/>
</dbReference>
<dbReference type="IntAct" id="P54475">
    <property type="interactions" value="1"/>
</dbReference>
<dbReference type="STRING" id="224308.BSU25140"/>
<dbReference type="PaxDb" id="224308-BSU25140"/>
<dbReference type="EnsemblBacteria" id="CAB14444">
    <property type="protein sequence ID" value="CAB14444"/>
    <property type="gene ID" value="BSU_25140"/>
</dbReference>
<dbReference type="GeneID" id="937908"/>
<dbReference type="KEGG" id="bsu:BSU25140"/>
<dbReference type="PATRIC" id="fig|224308.179.peg.2733"/>
<dbReference type="eggNOG" id="COG0513">
    <property type="taxonomic scope" value="Bacteria"/>
</dbReference>
<dbReference type="InParanoid" id="P54475"/>
<dbReference type="OrthoDB" id="9805696at2"/>
<dbReference type="PhylomeDB" id="P54475"/>
<dbReference type="BioCyc" id="BSUB:BSU25140-MONOMER"/>
<dbReference type="Proteomes" id="UP000001570">
    <property type="component" value="Chromosome"/>
</dbReference>
<dbReference type="GO" id="GO:0043590">
    <property type="term" value="C:bacterial nucleoid"/>
    <property type="evidence" value="ECO:0000314"/>
    <property type="project" value="UniProtKB"/>
</dbReference>
<dbReference type="GO" id="GO:0005829">
    <property type="term" value="C:cytosol"/>
    <property type="evidence" value="ECO:0000318"/>
    <property type="project" value="GO_Central"/>
</dbReference>
<dbReference type="GO" id="GO:0005524">
    <property type="term" value="F:ATP binding"/>
    <property type="evidence" value="ECO:0000250"/>
    <property type="project" value="UniProtKB"/>
</dbReference>
<dbReference type="GO" id="GO:0016887">
    <property type="term" value="F:ATP hydrolysis activity"/>
    <property type="evidence" value="ECO:0007669"/>
    <property type="project" value="RHEA"/>
</dbReference>
<dbReference type="GO" id="GO:0003723">
    <property type="term" value="F:RNA binding"/>
    <property type="evidence" value="ECO:0000250"/>
    <property type="project" value="UniProtKB"/>
</dbReference>
<dbReference type="GO" id="GO:0003724">
    <property type="term" value="F:RNA helicase activity"/>
    <property type="evidence" value="ECO:0000250"/>
    <property type="project" value="UniProtKB"/>
</dbReference>
<dbReference type="GO" id="GO:0033592">
    <property type="term" value="F:RNA strand annealing activity"/>
    <property type="evidence" value="ECO:0000318"/>
    <property type="project" value="GO_Central"/>
</dbReference>
<dbReference type="GO" id="GO:0009409">
    <property type="term" value="P:response to cold"/>
    <property type="evidence" value="ECO:0000316"/>
    <property type="project" value="UniProtKB"/>
</dbReference>
<dbReference type="GO" id="GO:0042254">
    <property type="term" value="P:ribosome biogenesis"/>
    <property type="evidence" value="ECO:0007669"/>
    <property type="project" value="UniProtKB-KW"/>
</dbReference>
<dbReference type="GO" id="GO:0006401">
    <property type="term" value="P:RNA catabolic process"/>
    <property type="evidence" value="ECO:0007669"/>
    <property type="project" value="UniProtKB-UniRule"/>
</dbReference>
<dbReference type="CDD" id="cd00268">
    <property type="entry name" value="DEADc"/>
    <property type="match status" value="1"/>
</dbReference>
<dbReference type="CDD" id="cd18787">
    <property type="entry name" value="SF2_C_DEAD"/>
    <property type="match status" value="1"/>
</dbReference>
<dbReference type="Gene3D" id="3.40.50.300">
    <property type="entry name" value="P-loop containing nucleotide triphosphate hydrolases"/>
    <property type="match status" value="2"/>
</dbReference>
<dbReference type="HAMAP" id="MF_01494">
    <property type="entry name" value="DEAD_helicase_CshB"/>
    <property type="match status" value="1"/>
</dbReference>
<dbReference type="InterPro" id="IPR030881">
    <property type="entry name" value="CshB"/>
</dbReference>
<dbReference type="InterPro" id="IPR011545">
    <property type="entry name" value="DEAD/DEAH_box_helicase_dom"/>
</dbReference>
<dbReference type="InterPro" id="IPR050547">
    <property type="entry name" value="DEAD_box_RNA_helicases"/>
</dbReference>
<dbReference type="InterPro" id="IPR014001">
    <property type="entry name" value="Helicase_ATP-bd"/>
</dbReference>
<dbReference type="InterPro" id="IPR001650">
    <property type="entry name" value="Helicase_C-like"/>
</dbReference>
<dbReference type="InterPro" id="IPR027417">
    <property type="entry name" value="P-loop_NTPase"/>
</dbReference>
<dbReference type="InterPro" id="IPR014014">
    <property type="entry name" value="RNA_helicase_DEAD_Q_motif"/>
</dbReference>
<dbReference type="PANTHER" id="PTHR47963">
    <property type="entry name" value="DEAD-BOX ATP-DEPENDENT RNA HELICASE 47, MITOCHONDRIAL"/>
    <property type="match status" value="1"/>
</dbReference>
<dbReference type="PANTHER" id="PTHR47963:SF1">
    <property type="entry name" value="DEAD-BOX ATP-DEPENDENT RNA HELICASE CSHB"/>
    <property type="match status" value="1"/>
</dbReference>
<dbReference type="Pfam" id="PF00270">
    <property type="entry name" value="DEAD"/>
    <property type="match status" value="1"/>
</dbReference>
<dbReference type="Pfam" id="PF00271">
    <property type="entry name" value="Helicase_C"/>
    <property type="match status" value="1"/>
</dbReference>
<dbReference type="SMART" id="SM00487">
    <property type="entry name" value="DEXDc"/>
    <property type="match status" value="1"/>
</dbReference>
<dbReference type="SMART" id="SM00490">
    <property type="entry name" value="HELICc"/>
    <property type="match status" value="1"/>
</dbReference>
<dbReference type="SUPFAM" id="SSF52540">
    <property type="entry name" value="P-loop containing nucleoside triphosphate hydrolases"/>
    <property type="match status" value="1"/>
</dbReference>
<dbReference type="PROSITE" id="PS51192">
    <property type="entry name" value="HELICASE_ATP_BIND_1"/>
    <property type="match status" value="1"/>
</dbReference>
<dbReference type="PROSITE" id="PS51194">
    <property type="entry name" value="HELICASE_CTER"/>
    <property type="match status" value="1"/>
</dbReference>
<dbReference type="PROSITE" id="PS51195">
    <property type="entry name" value="Q_MOTIF"/>
    <property type="match status" value="1"/>
</dbReference>
<keyword id="KW-0067">ATP-binding</keyword>
<keyword id="KW-0963">Cytoplasm</keyword>
<keyword id="KW-0347">Helicase</keyword>
<keyword id="KW-0378">Hydrolase</keyword>
<keyword id="KW-0547">Nucleotide-binding</keyword>
<keyword id="KW-1185">Reference proteome</keyword>
<keyword id="KW-0690">Ribosome biogenesis</keyword>
<keyword id="KW-0694">RNA-binding</keyword>
<keyword id="KW-0346">Stress response</keyword>
<organism>
    <name type="scientific">Bacillus subtilis (strain 168)</name>
    <dbReference type="NCBI Taxonomy" id="224308"/>
    <lineage>
        <taxon>Bacteria</taxon>
        <taxon>Bacillati</taxon>
        <taxon>Bacillota</taxon>
        <taxon>Bacilli</taxon>
        <taxon>Bacillales</taxon>
        <taxon>Bacillaceae</taxon>
        <taxon>Bacillus</taxon>
    </lineage>
</organism>
<name>CSHB_BACSU</name>
<evidence type="ECO:0000255" key="1">
    <source>
        <dbReference type="HAMAP-Rule" id="MF_01494"/>
    </source>
</evidence>
<evidence type="ECO:0000256" key="2">
    <source>
        <dbReference type="SAM" id="MobiDB-lite"/>
    </source>
</evidence>
<evidence type="ECO:0000269" key="3">
    <source>
    </source>
</evidence>
<evidence type="ECO:0000269" key="4">
    <source>
    </source>
</evidence>
<evidence type="ECO:0000269" key="5">
    <source>
    </source>
</evidence>
<evidence type="ECO:0000269" key="6">
    <source>
    </source>
</evidence>
<evidence type="ECO:0000305" key="7"/>
<protein>
    <recommendedName>
        <fullName evidence="1">DEAD-box ATP-dependent RNA helicase CshB</fullName>
        <ecNumber evidence="1">3.6.4.13</ecNumber>
    </recommendedName>
</protein>
<gene>
    <name evidence="1" type="primary">cshB</name>
    <name type="synonym">yqfR</name>
    <name type="ordered locus">BSU25140</name>
</gene>